<sequence>MSFDLIIKNGTVILENEARVVDIAVKGGKIAAIGQDLGDAKEVMDASGLVVSPGMVDAHTHISEPGRSHWEGYETGTRAAAKGGITTMIEMPLNQLPATVDRASIELKFDAAKGKLTIDAAQLGGLVSYNIDRLHELDEVGVVGFKCFVATCGDRGIDNDFRDVNDWQFFKGAQKLGELGQPVLVHCENALICDALGEEAKREGRVTAHDYVASRPVFTEVEAIRRVLYLAKVAGCRLHVCHISSPEGVEEVTRARQEGQDVTCESCPHYFVLDTDQFEEIGTLAKCSPPIRDLENQKGMWEKLFNGEIDCLVSDHSPCPPEMKAGNIMEAWGGIAGLQNCMDVMFDEAVQKRGMSLPMFGKLMATNAADIFGLQQKGRIAPGKDADFVFIQPNSSYVLTNDDLEYRHKVSPYVGRTIGARITKTILRGDVIYDIEQGFPVAPKGQFILKHQQ</sequence>
<comment type="function">
    <text evidence="1">Catalyzes the conversion of allantoin (5-ureidohydantoin) to allantoic acid by hydrolytic cleavage of the five-member hydantoin ring.</text>
</comment>
<comment type="catalytic activity">
    <reaction evidence="1">
        <text>(S)-allantoin + H2O = allantoate + H(+)</text>
        <dbReference type="Rhea" id="RHEA:17029"/>
        <dbReference type="ChEBI" id="CHEBI:15377"/>
        <dbReference type="ChEBI" id="CHEBI:15378"/>
        <dbReference type="ChEBI" id="CHEBI:15678"/>
        <dbReference type="ChEBI" id="CHEBI:17536"/>
        <dbReference type="EC" id="3.5.2.5"/>
    </reaction>
</comment>
<comment type="cofactor">
    <cofactor evidence="1">
        <name>Zn(2+)</name>
        <dbReference type="ChEBI" id="CHEBI:29105"/>
    </cofactor>
    <text evidence="1">Binds 2 Zn(2+) ions per subunit.</text>
</comment>
<comment type="pathway">
    <text evidence="1">Nitrogen metabolism; (S)-allantoin degradation; allantoate from (S)-allantoin: step 1/1.</text>
</comment>
<comment type="subunit">
    <text evidence="1">Homotetramer.</text>
</comment>
<comment type="PTM">
    <text evidence="1">Carboxylation allows a single lysine to coordinate two zinc ions.</text>
</comment>
<comment type="similarity">
    <text evidence="1">Belongs to the metallo-dependent hydrolases superfamily. Allantoinase family.</text>
</comment>
<proteinExistence type="inferred from homology"/>
<accession>B7M4L5</accession>
<gene>
    <name evidence="1" type="primary">allB</name>
    <name type="ordered locus">ECIAI1_0514</name>
</gene>
<protein>
    <recommendedName>
        <fullName evidence="1">Allantoinase</fullName>
        <ecNumber evidence="1">3.5.2.5</ecNumber>
    </recommendedName>
    <alternativeName>
        <fullName evidence="1">Allantoin-utilizing enzyme</fullName>
    </alternativeName>
</protein>
<reference key="1">
    <citation type="journal article" date="2009" name="PLoS Genet.">
        <title>Organised genome dynamics in the Escherichia coli species results in highly diverse adaptive paths.</title>
        <authorList>
            <person name="Touchon M."/>
            <person name="Hoede C."/>
            <person name="Tenaillon O."/>
            <person name="Barbe V."/>
            <person name="Baeriswyl S."/>
            <person name="Bidet P."/>
            <person name="Bingen E."/>
            <person name="Bonacorsi S."/>
            <person name="Bouchier C."/>
            <person name="Bouvet O."/>
            <person name="Calteau A."/>
            <person name="Chiapello H."/>
            <person name="Clermont O."/>
            <person name="Cruveiller S."/>
            <person name="Danchin A."/>
            <person name="Diard M."/>
            <person name="Dossat C."/>
            <person name="Karoui M.E."/>
            <person name="Frapy E."/>
            <person name="Garry L."/>
            <person name="Ghigo J.M."/>
            <person name="Gilles A.M."/>
            <person name="Johnson J."/>
            <person name="Le Bouguenec C."/>
            <person name="Lescat M."/>
            <person name="Mangenot S."/>
            <person name="Martinez-Jehanne V."/>
            <person name="Matic I."/>
            <person name="Nassif X."/>
            <person name="Oztas S."/>
            <person name="Petit M.A."/>
            <person name="Pichon C."/>
            <person name="Rouy Z."/>
            <person name="Ruf C.S."/>
            <person name="Schneider D."/>
            <person name="Tourret J."/>
            <person name="Vacherie B."/>
            <person name="Vallenet D."/>
            <person name="Medigue C."/>
            <person name="Rocha E.P.C."/>
            <person name="Denamur E."/>
        </authorList>
    </citation>
    <scope>NUCLEOTIDE SEQUENCE [LARGE SCALE GENOMIC DNA]</scope>
    <source>
        <strain>IAI1</strain>
    </source>
</reference>
<evidence type="ECO:0000255" key="1">
    <source>
        <dbReference type="HAMAP-Rule" id="MF_01645"/>
    </source>
</evidence>
<name>ALLB_ECO8A</name>
<dbReference type="EC" id="3.5.2.5" evidence="1"/>
<dbReference type="EMBL" id="CU928160">
    <property type="protein sequence ID" value="CAQ97386.1"/>
    <property type="molecule type" value="Genomic_DNA"/>
</dbReference>
<dbReference type="RefSeq" id="WP_000006887.1">
    <property type="nucleotide sequence ID" value="NC_011741.1"/>
</dbReference>
<dbReference type="SMR" id="B7M4L5"/>
<dbReference type="GeneID" id="75204378"/>
<dbReference type="KEGG" id="ecr:ECIAI1_0514"/>
<dbReference type="HOGENOM" id="CLU_015572_4_2_6"/>
<dbReference type="UniPathway" id="UPA00395">
    <property type="reaction ID" value="UER00653"/>
</dbReference>
<dbReference type="GO" id="GO:0005737">
    <property type="term" value="C:cytoplasm"/>
    <property type="evidence" value="ECO:0007669"/>
    <property type="project" value="TreeGrafter"/>
</dbReference>
<dbReference type="GO" id="GO:0004038">
    <property type="term" value="F:allantoinase activity"/>
    <property type="evidence" value="ECO:0007669"/>
    <property type="project" value="UniProtKB-UniRule"/>
</dbReference>
<dbReference type="GO" id="GO:0050897">
    <property type="term" value="F:cobalt ion binding"/>
    <property type="evidence" value="ECO:0007669"/>
    <property type="project" value="InterPro"/>
</dbReference>
<dbReference type="GO" id="GO:0008270">
    <property type="term" value="F:zinc ion binding"/>
    <property type="evidence" value="ECO:0007669"/>
    <property type="project" value="InterPro"/>
</dbReference>
<dbReference type="GO" id="GO:0000256">
    <property type="term" value="P:allantoin catabolic process"/>
    <property type="evidence" value="ECO:0007669"/>
    <property type="project" value="UniProtKB-UniRule"/>
</dbReference>
<dbReference type="GO" id="GO:0006145">
    <property type="term" value="P:purine nucleobase catabolic process"/>
    <property type="evidence" value="ECO:0007669"/>
    <property type="project" value="TreeGrafter"/>
</dbReference>
<dbReference type="CDD" id="cd01315">
    <property type="entry name" value="L-HYD_ALN"/>
    <property type="match status" value="1"/>
</dbReference>
<dbReference type="FunFam" id="3.20.20.140:FF:000013">
    <property type="entry name" value="Allantoinase"/>
    <property type="match status" value="1"/>
</dbReference>
<dbReference type="Gene3D" id="3.20.20.140">
    <property type="entry name" value="Metal-dependent hydrolases"/>
    <property type="match status" value="1"/>
</dbReference>
<dbReference type="Gene3D" id="2.30.40.10">
    <property type="entry name" value="Urease, subunit C, domain 1"/>
    <property type="match status" value="1"/>
</dbReference>
<dbReference type="HAMAP" id="MF_01645">
    <property type="entry name" value="Hydantoinase"/>
    <property type="match status" value="1"/>
</dbReference>
<dbReference type="InterPro" id="IPR017593">
    <property type="entry name" value="Allantoinase"/>
</dbReference>
<dbReference type="InterPro" id="IPR047604">
    <property type="entry name" value="Allantoinase_bact"/>
</dbReference>
<dbReference type="InterPro" id="IPR006680">
    <property type="entry name" value="Amidohydro-rel"/>
</dbReference>
<dbReference type="InterPro" id="IPR050138">
    <property type="entry name" value="DHOase/Allantoinase_Hydrolase"/>
</dbReference>
<dbReference type="InterPro" id="IPR011059">
    <property type="entry name" value="Metal-dep_hydrolase_composite"/>
</dbReference>
<dbReference type="InterPro" id="IPR032466">
    <property type="entry name" value="Metal_Hydrolase"/>
</dbReference>
<dbReference type="NCBIfam" id="TIGR03178">
    <property type="entry name" value="allantoinase"/>
    <property type="match status" value="1"/>
</dbReference>
<dbReference type="NCBIfam" id="NF005960">
    <property type="entry name" value="PRK08044.1"/>
    <property type="match status" value="1"/>
</dbReference>
<dbReference type="PANTHER" id="PTHR43668">
    <property type="entry name" value="ALLANTOINASE"/>
    <property type="match status" value="1"/>
</dbReference>
<dbReference type="PANTHER" id="PTHR43668:SF4">
    <property type="entry name" value="ALLANTOINASE"/>
    <property type="match status" value="1"/>
</dbReference>
<dbReference type="Pfam" id="PF01979">
    <property type="entry name" value="Amidohydro_1"/>
    <property type="match status" value="1"/>
</dbReference>
<dbReference type="SUPFAM" id="SSF51338">
    <property type="entry name" value="Composite domain of metallo-dependent hydrolases"/>
    <property type="match status" value="1"/>
</dbReference>
<dbReference type="SUPFAM" id="SSF51556">
    <property type="entry name" value="Metallo-dependent hydrolases"/>
    <property type="match status" value="1"/>
</dbReference>
<keyword id="KW-0378">Hydrolase</keyword>
<keyword id="KW-0479">Metal-binding</keyword>
<keyword id="KW-0659">Purine metabolism</keyword>
<keyword id="KW-0862">Zinc</keyword>
<feature type="chain" id="PRO_1000186921" description="Allantoinase">
    <location>
        <begin position="1"/>
        <end position="453"/>
    </location>
</feature>
<feature type="binding site" evidence="1">
    <location>
        <position position="59"/>
    </location>
    <ligand>
        <name>Zn(2+)</name>
        <dbReference type="ChEBI" id="CHEBI:29105"/>
        <label>1</label>
    </ligand>
</feature>
<feature type="binding site" evidence="1">
    <location>
        <position position="61"/>
    </location>
    <ligand>
        <name>Zn(2+)</name>
        <dbReference type="ChEBI" id="CHEBI:29105"/>
        <label>1</label>
    </ligand>
</feature>
<feature type="binding site" description="via carbamate group" evidence="1">
    <location>
        <position position="146"/>
    </location>
    <ligand>
        <name>Zn(2+)</name>
        <dbReference type="ChEBI" id="CHEBI:29105"/>
        <label>1</label>
    </ligand>
</feature>
<feature type="binding site" description="via carbamate group" evidence="1">
    <location>
        <position position="146"/>
    </location>
    <ligand>
        <name>Zn(2+)</name>
        <dbReference type="ChEBI" id="CHEBI:29105"/>
        <label>2</label>
    </ligand>
</feature>
<feature type="binding site" evidence="1">
    <location>
        <position position="186"/>
    </location>
    <ligand>
        <name>Zn(2+)</name>
        <dbReference type="ChEBI" id="CHEBI:29105"/>
        <label>2</label>
    </ligand>
</feature>
<feature type="binding site" evidence="1">
    <location>
        <position position="242"/>
    </location>
    <ligand>
        <name>Zn(2+)</name>
        <dbReference type="ChEBI" id="CHEBI:29105"/>
        <label>2</label>
    </ligand>
</feature>
<feature type="binding site" evidence="1">
    <location>
        <position position="315"/>
    </location>
    <ligand>
        <name>Zn(2+)</name>
        <dbReference type="ChEBI" id="CHEBI:29105"/>
        <label>1</label>
    </ligand>
</feature>
<feature type="modified residue" description="N6-carboxylysine" evidence="1">
    <location>
        <position position="146"/>
    </location>
</feature>
<organism>
    <name type="scientific">Escherichia coli O8 (strain IAI1)</name>
    <dbReference type="NCBI Taxonomy" id="585034"/>
    <lineage>
        <taxon>Bacteria</taxon>
        <taxon>Pseudomonadati</taxon>
        <taxon>Pseudomonadota</taxon>
        <taxon>Gammaproteobacteria</taxon>
        <taxon>Enterobacterales</taxon>
        <taxon>Enterobacteriaceae</taxon>
        <taxon>Escherichia</taxon>
    </lineage>
</organism>